<feature type="chain" id="PRO_0000387709" description="Acetaldehyde dehydrogenase 1">
    <location>
        <begin position="1"/>
        <end position="310"/>
    </location>
</feature>
<feature type="active site" description="Acyl-thioester intermediate" evidence="1">
    <location>
        <position position="132"/>
    </location>
</feature>
<feature type="binding site" evidence="1">
    <location>
        <begin position="12"/>
        <end position="15"/>
    </location>
    <ligand>
        <name>NAD(+)</name>
        <dbReference type="ChEBI" id="CHEBI:57540"/>
    </ligand>
</feature>
<feature type="binding site" evidence="1">
    <location>
        <begin position="163"/>
        <end position="171"/>
    </location>
    <ligand>
        <name>NAD(+)</name>
        <dbReference type="ChEBI" id="CHEBI:57540"/>
    </ligand>
</feature>
<feature type="binding site" evidence="1">
    <location>
        <position position="287"/>
    </location>
    <ligand>
        <name>NAD(+)</name>
        <dbReference type="ChEBI" id="CHEBI:57540"/>
    </ligand>
</feature>
<proteinExistence type="inferred from homology"/>
<dbReference type="EC" id="1.2.1.10" evidence="1"/>
<dbReference type="EMBL" id="CP000949">
    <property type="protein sequence ID" value="ACA72484.1"/>
    <property type="molecule type" value="Genomic_DNA"/>
</dbReference>
<dbReference type="SMR" id="B1J6Y6"/>
<dbReference type="STRING" id="390235.PputW619_1983"/>
<dbReference type="KEGG" id="ppw:PputW619_1983"/>
<dbReference type="eggNOG" id="COG4569">
    <property type="taxonomic scope" value="Bacteria"/>
</dbReference>
<dbReference type="HOGENOM" id="CLU_062208_0_0_6"/>
<dbReference type="OrthoDB" id="9786743at2"/>
<dbReference type="GO" id="GO:0008774">
    <property type="term" value="F:acetaldehyde dehydrogenase (acetylating) activity"/>
    <property type="evidence" value="ECO:0007669"/>
    <property type="project" value="UniProtKB-UniRule"/>
</dbReference>
<dbReference type="GO" id="GO:0051287">
    <property type="term" value="F:NAD binding"/>
    <property type="evidence" value="ECO:0007669"/>
    <property type="project" value="UniProtKB-UniRule"/>
</dbReference>
<dbReference type="GO" id="GO:0009056">
    <property type="term" value="P:catabolic process"/>
    <property type="evidence" value="ECO:0007669"/>
    <property type="project" value="UniProtKB-KW"/>
</dbReference>
<dbReference type="CDD" id="cd23933">
    <property type="entry name" value="ALDH_C"/>
    <property type="match status" value="1"/>
</dbReference>
<dbReference type="Gene3D" id="3.30.360.10">
    <property type="entry name" value="Dihydrodipicolinate Reductase, domain 2"/>
    <property type="match status" value="1"/>
</dbReference>
<dbReference type="Gene3D" id="3.40.50.720">
    <property type="entry name" value="NAD(P)-binding Rossmann-like Domain"/>
    <property type="match status" value="1"/>
</dbReference>
<dbReference type="HAMAP" id="MF_01657">
    <property type="entry name" value="Ac_ald_DH_ac"/>
    <property type="match status" value="1"/>
</dbReference>
<dbReference type="InterPro" id="IPR003361">
    <property type="entry name" value="Acetaldehyde_dehydrogenase"/>
</dbReference>
<dbReference type="InterPro" id="IPR015426">
    <property type="entry name" value="Acetylaldehyde_DH_C"/>
</dbReference>
<dbReference type="InterPro" id="IPR036291">
    <property type="entry name" value="NAD(P)-bd_dom_sf"/>
</dbReference>
<dbReference type="InterPro" id="IPR000534">
    <property type="entry name" value="Semialdehyde_DH_NAD-bd"/>
</dbReference>
<dbReference type="NCBIfam" id="TIGR03215">
    <property type="entry name" value="ac_ald_DH_ac"/>
    <property type="match status" value="1"/>
</dbReference>
<dbReference type="NCBIfam" id="NF006157">
    <property type="entry name" value="PRK08300.1"/>
    <property type="match status" value="1"/>
</dbReference>
<dbReference type="Pfam" id="PF09290">
    <property type="entry name" value="AcetDehyd-dimer"/>
    <property type="match status" value="1"/>
</dbReference>
<dbReference type="Pfam" id="PF01118">
    <property type="entry name" value="Semialdhyde_dh"/>
    <property type="match status" value="1"/>
</dbReference>
<dbReference type="PIRSF" id="PIRSF015689">
    <property type="entry name" value="Actaldh_dh_actl"/>
    <property type="match status" value="1"/>
</dbReference>
<dbReference type="SMART" id="SM00859">
    <property type="entry name" value="Semialdhyde_dh"/>
    <property type="match status" value="1"/>
</dbReference>
<dbReference type="SUPFAM" id="SSF55347">
    <property type="entry name" value="Glyceraldehyde-3-phosphate dehydrogenase-like, C-terminal domain"/>
    <property type="match status" value="1"/>
</dbReference>
<dbReference type="SUPFAM" id="SSF51735">
    <property type="entry name" value="NAD(P)-binding Rossmann-fold domains"/>
    <property type="match status" value="1"/>
</dbReference>
<reference key="1">
    <citation type="submission" date="2008-02" db="EMBL/GenBank/DDBJ databases">
        <title>Complete sequence of Pseudomonas putida W619.</title>
        <authorList>
            <person name="Copeland A."/>
            <person name="Lucas S."/>
            <person name="Lapidus A."/>
            <person name="Barry K."/>
            <person name="Detter J.C."/>
            <person name="Glavina del Rio T."/>
            <person name="Dalin E."/>
            <person name="Tice H."/>
            <person name="Pitluck S."/>
            <person name="Chain P."/>
            <person name="Malfatti S."/>
            <person name="Shin M."/>
            <person name="Vergez L."/>
            <person name="Schmutz J."/>
            <person name="Larimer F."/>
            <person name="Land M."/>
            <person name="Hauser L."/>
            <person name="Kyrpides N."/>
            <person name="Kim E."/>
            <person name="Taghavi S."/>
            <person name="Vangronsveld D."/>
            <person name="van der Lelie D."/>
            <person name="Richardson P."/>
        </authorList>
    </citation>
    <scope>NUCLEOTIDE SEQUENCE [LARGE SCALE GENOMIC DNA]</scope>
    <source>
        <strain>W619</strain>
    </source>
</reference>
<name>ACDH1_PSEPW</name>
<protein>
    <recommendedName>
        <fullName evidence="1">Acetaldehyde dehydrogenase 1</fullName>
        <ecNumber evidence="1">1.2.1.10</ecNumber>
    </recommendedName>
    <alternativeName>
        <fullName evidence="1">Acetaldehyde dehydrogenase [acetylating] 1</fullName>
    </alternativeName>
</protein>
<organism>
    <name type="scientific">Pseudomonas putida (strain W619)</name>
    <dbReference type="NCBI Taxonomy" id="390235"/>
    <lineage>
        <taxon>Bacteria</taxon>
        <taxon>Pseudomonadati</taxon>
        <taxon>Pseudomonadota</taxon>
        <taxon>Gammaproteobacteria</taxon>
        <taxon>Pseudomonadales</taxon>
        <taxon>Pseudomonadaceae</taxon>
        <taxon>Pseudomonas</taxon>
    </lineage>
</organism>
<accession>B1J6Y6</accession>
<comment type="catalytic activity">
    <reaction evidence="1">
        <text>acetaldehyde + NAD(+) + CoA = acetyl-CoA + NADH + H(+)</text>
        <dbReference type="Rhea" id="RHEA:23288"/>
        <dbReference type="ChEBI" id="CHEBI:15343"/>
        <dbReference type="ChEBI" id="CHEBI:15378"/>
        <dbReference type="ChEBI" id="CHEBI:57287"/>
        <dbReference type="ChEBI" id="CHEBI:57288"/>
        <dbReference type="ChEBI" id="CHEBI:57540"/>
        <dbReference type="ChEBI" id="CHEBI:57945"/>
        <dbReference type="EC" id="1.2.1.10"/>
    </reaction>
</comment>
<comment type="similarity">
    <text evidence="1">Belongs to the acetaldehyde dehydrogenase family.</text>
</comment>
<gene>
    <name type="ordered locus">PputW619_1983</name>
</gene>
<evidence type="ECO:0000255" key="1">
    <source>
        <dbReference type="HAMAP-Rule" id="MF_01657"/>
    </source>
</evidence>
<sequence length="310" mass="32780">MSQKRKVAIIGSGNIGTDLMIKILRNAKHLEMAAMVGIDQASDGLARAARMGVATTADGVDGLTRLPVFQDIDFVFDATSAGAHVKNDAFLRQHKASLRMIDLTPAAIGPYCVPVVNLEQHLQAINVNMVTCGGQATIPMVAAVSRVAKVHYAEIVASIASKSAGPGTRANIDEFTETTSKAIEVIGGATKGKAIIIMNPAEPPLMMRDTVYVLSETADQKQIAASIEEMAASVQAYVPGYRLKQQVQFEQVHNLTLPGQGTFTGLKTSVFLEVEGAAHYLPAYAGNLDIMTSAALATAERMAQAMGPLA</sequence>
<keyword id="KW-0058">Aromatic hydrocarbons catabolism</keyword>
<keyword id="KW-0520">NAD</keyword>
<keyword id="KW-0560">Oxidoreductase</keyword>